<accession>Q7XI96</accession>
<accession>A0A0P0X7Z8</accession>
<accession>Q0D559</accession>
<gene>
    <name evidence="9" type="primary">BZR1</name>
    <name evidence="12" type="ordered locus">Os07g0580500</name>
    <name evidence="10" type="ordered locus">LOC_Os07g39220</name>
    <name evidence="13" type="ORF">OsJ_24880</name>
    <name type="ORF">P0453G03.22</name>
</gene>
<sequence length="298" mass="31909">MTSGAAAAGRTPTWKERENNKRRERRRRAIAAKIFTGLRALGNYNLPKHCDNNEVLKALCREAGWVVEDDGTTYRKGCKPPPSSAGGASVGMSPCSSTQLLSAPSSSFPSPVPSYHASPASSSFPSPSRIDNPSASCLLPFLRGLPNLPPLRVSSSAPVTPPLSSPTASRPPKIRKPDWDVDPFRHPFFAVSAPASPTRGRRLEHPDTIPECDESDVSTVDSGRWISFQMATTAPTSPTYNLVNPGASTSNSMEIEGTAGRGGAEFEFDKGRVTPWEGERIHEVAAEELELTLGVGAK</sequence>
<organism>
    <name type="scientific">Oryza sativa subsp. japonica</name>
    <name type="common">Rice</name>
    <dbReference type="NCBI Taxonomy" id="39947"/>
    <lineage>
        <taxon>Eukaryota</taxon>
        <taxon>Viridiplantae</taxon>
        <taxon>Streptophyta</taxon>
        <taxon>Embryophyta</taxon>
        <taxon>Tracheophyta</taxon>
        <taxon>Spermatophyta</taxon>
        <taxon>Magnoliopsida</taxon>
        <taxon>Liliopsida</taxon>
        <taxon>Poales</taxon>
        <taxon>Poaceae</taxon>
        <taxon>BOP clade</taxon>
        <taxon>Oryzoideae</taxon>
        <taxon>Oryzeae</taxon>
        <taxon>Oryzinae</taxon>
        <taxon>Oryza</taxon>
        <taxon>Oryza sativa</taxon>
    </lineage>
</organism>
<comment type="function">
    <text evidence="3 4 5">Positive brassinosteroid-signaling protein. Mediates downstream brassinosteroid-regulated growth response and feedback inhibition of brassinosteroid (BR) biosynthetic genes (PubMed:17699623, PubMed:19220793). May act as transcriptional repressor by binding the brassinosteroid-response element (BREE) (5'-CGTG(T/C)G-3') in the promoter of DLT (AC Q9LWU9), another positive regulator of BR signaling (PubMed:19220793). Acts as a transcriptional repressor of LIC, a negative regulator of BR signaling, by binding to the BRRE element of its promoter. BZR1 and LIC play opposite roles in BR signaling and regulation of leaf bending (PubMed:22570626).</text>
</comment>
<comment type="subunit">
    <text evidence="3 7 8">Interacts with GF14C (PubMed:17699623). Interacts with PUB24 (PubMed:30920691). Interacts with SMOS1 (PubMed:28100707).</text>
</comment>
<comment type="interaction">
    <interactant intactId="EBI-15652208">
        <id>Q7XI96</id>
    </interactant>
    <interactant intactId="EBI-628537">
        <id>Q6ZKC0</id>
        <label>GF14C</label>
    </interactant>
    <organismsDiffer>false</organismsDiffer>
    <experiments>3</experiments>
</comment>
<comment type="subcellular location">
    <subcellularLocation>
        <location evidence="3 8">Nucleus</location>
    </subcellularLocation>
    <subcellularLocation>
        <location evidence="3 8">Cytoplasm</location>
    </subcellularLocation>
    <text evidence="3">Brassinosteroid promotes nuclear localization, and binding to GF14C is required for cytoplasmic retention and efficient inhibition of BZR1 when brassinosteroid levels are low.</text>
</comment>
<comment type="induction">
    <text evidence="5">Down-regulated by 24-epibrassinolide.</text>
</comment>
<comment type="PTM">
    <text evidence="3 6">Phosphorylated on serine and threonine residues by GSK2 (PubMed:22685166). Dephosphorylated during response to brassinosteroid (PubMed:17699623, PubMed:22685166).</text>
</comment>
<comment type="PTM">
    <text evidence="8">Ubiquitinated by PUB24 (PubMed:30920691). Ubiquitination leads to its subsequent degradation by the 26S proteasome, thus reducing sensitivity to brassinosteroid signaling (PubMed:30920691).</text>
</comment>
<comment type="miscellaneous">
    <text evidence="3">Plants silencing BZR1 are dwarf with erect leaves, and have reduced brassinosteroid sensitivity and altered expression of brassinosteroid-responsive genes.</text>
</comment>
<comment type="similarity">
    <text evidence="10">Belongs to the BZR/LAT61 family.</text>
</comment>
<comment type="sequence caution" evidence="10">
    <conflict type="erroneous initiation">
        <sequence resource="EMBL-CDS" id="BAF22014"/>
    </conflict>
    <text>Extended N-terminus.</text>
</comment>
<proteinExistence type="evidence at protein level"/>
<name>BZR1_ORYSJ</name>
<evidence type="ECO:0000250" key="1"/>
<evidence type="ECO:0000256" key="2">
    <source>
        <dbReference type="SAM" id="MobiDB-lite"/>
    </source>
</evidence>
<evidence type="ECO:0000269" key="3">
    <source>
    </source>
</evidence>
<evidence type="ECO:0000269" key="4">
    <source>
    </source>
</evidence>
<evidence type="ECO:0000269" key="5">
    <source>
    </source>
</evidence>
<evidence type="ECO:0000269" key="6">
    <source>
    </source>
</evidence>
<evidence type="ECO:0000269" key="7">
    <source>
    </source>
</evidence>
<evidence type="ECO:0000269" key="8">
    <source>
    </source>
</evidence>
<evidence type="ECO:0000303" key="9">
    <source>
    </source>
</evidence>
<evidence type="ECO:0000305" key="10"/>
<evidence type="ECO:0000305" key="11">
    <source>
    </source>
</evidence>
<evidence type="ECO:0000312" key="12">
    <source>
        <dbReference type="EMBL" id="BAT02328.1"/>
    </source>
</evidence>
<evidence type="ECO:0000312" key="13">
    <source>
        <dbReference type="EMBL" id="EAZ40428.1"/>
    </source>
</evidence>
<feature type="chain" id="PRO_0000429108" description="Protein BZR1 homolog 1">
    <location>
        <begin position="1"/>
        <end position="298"/>
    </location>
</feature>
<feature type="region of interest" description="Disordered" evidence="2">
    <location>
        <begin position="1"/>
        <end position="25"/>
    </location>
</feature>
<feature type="region of interest" description="Required for DNA-binding" evidence="1">
    <location>
        <begin position="10"/>
        <end position="91"/>
    </location>
</feature>
<feature type="region of interest" description="Disordered" evidence="2">
    <location>
        <begin position="71"/>
        <end position="129"/>
    </location>
</feature>
<feature type="region of interest" description="Disordered" evidence="2">
    <location>
        <begin position="153"/>
        <end position="175"/>
    </location>
</feature>
<feature type="region of interest" description="Disordered" evidence="2">
    <location>
        <begin position="190"/>
        <end position="217"/>
    </location>
</feature>
<feature type="region of interest" description="PEST-like">
    <location>
        <begin position="204"/>
        <end position="224"/>
    </location>
</feature>
<feature type="compositionally biased region" description="Low complexity" evidence="2">
    <location>
        <begin position="96"/>
        <end position="128"/>
    </location>
</feature>
<feature type="modified residue" description="Phosphoserine" evidence="11">
    <location>
        <position position="156"/>
    </location>
</feature>
<feature type="mutagenesis site" description="Abolishes interaction with GF14C; increases nuclear localization and activity." evidence="3">
    <original>S</original>
    <variation>G</variation>
    <location>
        <position position="156"/>
    </location>
</feature>
<feature type="mutagenesis site" description="Increases lamina joint bending." evidence="3">
    <original>P</original>
    <variation>L</variation>
    <location>
        <position position="206"/>
    </location>
</feature>
<keyword id="KW-1070">Brassinosteroid signaling pathway</keyword>
<keyword id="KW-0963">Cytoplasm</keyword>
<keyword id="KW-0238">DNA-binding</keyword>
<keyword id="KW-0341">Growth regulation</keyword>
<keyword id="KW-0539">Nucleus</keyword>
<keyword id="KW-0597">Phosphoprotein</keyword>
<keyword id="KW-1185">Reference proteome</keyword>
<keyword id="KW-0678">Repressor</keyword>
<keyword id="KW-0804">Transcription</keyword>
<keyword id="KW-0805">Transcription regulation</keyword>
<keyword id="KW-0832">Ubl conjugation</keyword>
<reference key="1">
    <citation type="journal article" date="2005" name="Nature">
        <title>The map-based sequence of the rice genome.</title>
        <authorList>
            <consortium name="International rice genome sequencing project (IRGSP)"/>
        </authorList>
    </citation>
    <scope>NUCLEOTIDE SEQUENCE [LARGE SCALE GENOMIC DNA]</scope>
    <source>
        <strain>cv. Nipponbare</strain>
    </source>
</reference>
<reference key="2">
    <citation type="journal article" date="2008" name="Nucleic Acids Res.">
        <title>The rice annotation project database (RAP-DB): 2008 update.</title>
        <authorList>
            <consortium name="The rice annotation project (RAP)"/>
        </authorList>
    </citation>
    <scope>GENOME REANNOTATION</scope>
    <source>
        <strain>cv. Nipponbare</strain>
    </source>
</reference>
<reference key="3">
    <citation type="journal article" date="2013" name="Rice">
        <title>Improvement of the Oryza sativa Nipponbare reference genome using next generation sequence and optical map data.</title>
        <authorList>
            <person name="Kawahara Y."/>
            <person name="de la Bastide M."/>
            <person name="Hamilton J.P."/>
            <person name="Kanamori H."/>
            <person name="McCombie W.R."/>
            <person name="Ouyang S."/>
            <person name="Schwartz D.C."/>
            <person name="Tanaka T."/>
            <person name="Wu J."/>
            <person name="Zhou S."/>
            <person name="Childs K.L."/>
            <person name="Davidson R.M."/>
            <person name="Lin H."/>
            <person name="Quesada-Ocampo L."/>
            <person name="Vaillancourt B."/>
            <person name="Sakai H."/>
            <person name="Lee S.S."/>
            <person name="Kim J."/>
            <person name="Numa H."/>
            <person name="Itoh T."/>
            <person name="Buell C.R."/>
            <person name="Matsumoto T."/>
        </authorList>
    </citation>
    <scope>GENOME REANNOTATION</scope>
    <source>
        <strain>cv. Nipponbare</strain>
    </source>
</reference>
<reference key="4">
    <citation type="journal article" date="2005" name="PLoS Biol.">
        <title>The genomes of Oryza sativa: a history of duplications.</title>
        <authorList>
            <person name="Yu J."/>
            <person name="Wang J."/>
            <person name="Lin W."/>
            <person name="Li S."/>
            <person name="Li H."/>
            <person name="Zhou J."/>
            <person name="Ni P."/>
            <person name="Dong W."/>
            <person name="Hu S."/>
            <person name="Zeng C."/>
            <person name="Zhang J."/>
            <person name="Zhang Y."/>
            <person name="Li R."/>
            <person name="Xu Z."/>
            <person name="Li S."/>
            <person name="Li X."/>
            <person name="Zheng H."/>
            <person name="Cong L."/>
            <person name="Lin L."/>
            <person name="Yin J."/>
            <person name="Geng J."/>
            <person name="Li G."/>
            <person name="Shi J."/>
            <person name="Liu J."/>
            <person name="Lv H."/>
            <person name="Li J."/>
            <person name="Wang J."/>
            <person name="Deng Y."/>
            <person name="Ran L."/>
            <person name="Shi X."/>
            <person name="Wang X."/>
            <person name="Wu Q."/>
            <person name="Li C."/>
            <person name="Ren X."/>
            <person name="Wang J."/>
            <person name="Wang X."/>
            <person name="Li D."/>
            <person name="Liu D."/>
            <person name="Zhang X."/>
            <person name="Ji Z."/>
            <person name="Zhao W."/>
            <person name="Sun Y."/>
            <person name="Zhang Z."/>
            <person name="Bao J."/>
            <person name="Han Y."/>
            <person name="Dong L."/>
            <person name="Ji J."/>
            <person name="Chen P."/>
            <person name="Wu S."/>
            <person name="Liu J."/>
            <person name="Xiao Y."/>
            <person name="Bu D."/>
            <person name="Tan J."/>
            <person name="Yang L."/>
            <person name="Ye C."/>
            <person name="Zhang J."/>
            <person name="Xu J."/>
            <person name="Zhou Y."/>
            <person name="Yu Y."/>
            <person name="Zhang B."/>
            <person name="Zhuang S."/>
            <person name="Wei H."/>
            <person name="Liu B."/>
            <person name="Lei M."/>
            <person name="Yu H."/>
            <person name="Li Y."/>
            <person name="Xu H."/>
            <person name="Wei S."/>
            <person name="He X."/>
            <person name="Fang L."/>
            <person name="Zhang Z."/>
            <person name="Zhang Y."/>
            <person name="Huang X."/>
            <person name="Su Z."/>
            <person name="Tong W."/>
            <person name="Li J."/>
            <person name="Tong Z."/>
            <person name="Li S."/>
            <person name="Ye J."/>
            <person name="Wang L."/>
            <person name="Fang L."/>
            <person name="Lei T."/>
            <person name="Chen C.-S."/>
            <person name="Chen H.-C."/>
            <person name="Xu Z."/>
            <person name="Li H."/>
            <person name="Huang H."/>
            <person name="Zhang F."/>
            <person name="Xu H."/>
            <person name="Li N."/>
            <person name="Zhao C."/>
            <person name="Li S."/>
            <person name="Dong L."/>
            <person name="Huang Y."/>
            <person name="Li L."/>
            <person name="Xi Y."/>
            <person name="Qi Q."/>
            <person name="Li W."/>
            <person name="Zhang B."/>
            <person name="Hu W."/>
            <person name="Zhang Y."/>
            <person name="Tian X."/>
            <person name="Jiao Y."/>
            <person name="Liang X."/>
            <person name="Jin J."/>
            <person name="Gao L."/>
            <person name="Zheng W."/>
            <person name="Hao B."/>
            <person name="Liu S.-M."/>
            <person name="Wang W."/>
            <person name="Yuan L."/>
            <person name="Cao M."/>
            <person name="McDermott J."/>
            <person name="Samudrala R."/>
            <person name="Wang J."/>
            <person name="Wong G.K.-S."/>
            <person name="Yang H."/>
        </authorList>
    </citation>
    <scope>NUCLEOTIDE SEQUENCE [LARGE SCALE GENOMIC DNA]</scope>
    <source>
        <strain>cv. Nipponbare</strain>
    </source>
</reference>
<reference key="5">
    <citation type="journal article" date="2003" name="Science">
        <title>Collection, mapping, and annotation of over 28,000 cDNA clones from japonica rice.</title>
        <authorList>
            <consortium name="The rice full-length cDNA consortium"/>
        </authorList>
    </citation>
    <scope>NUCLEOTIDE SEQUENCE [LARGE SCALE MRNA]</scope>
    <source>
        <strain>cv. Nipponbare</strain>
    </source>
</reference>
<reference key="6">
    <citation type="journal article" date="2007" name="Proc. Natl. Acad. Sci. U.S.A.">
        <title>Functions of OsBZR1 and 14-3-3 proteins in brassinosteroid signaling in rice.</title>
        <authorList>
            <person name="Bai M.Y."/>
            <person name="Zhang L.Y."/>
            <person name="Gampala S.S."/>
            <person name="Zhu S.W."/>
            <person name="Song W.Y."/>
            <person name="Chong K."/>
            <person name="Wang Z.Y."/>
        </authorList>
    </citation>
    <scope>FUNCTION</scope>
    <scope>INTERACTION WITH GF14C</scope>
    <scope>SUBCELLULAR LOCATION</scope>
    <scope>PHOSPHORYLATION AT SER-156</scope>
    <scope>MUTAGENESIS OF SER-156 AND PRO-206</scope>
</reference>
<reference key="7">
    <citation type="journal article" date="2009" name="Plant J.">
        <title>DWARF AND LOW-TILLERING, a new member of the GRAS family, plays positive roles in brassinosteroid signaling in rice.</title>
        <authorList>
            <person name="Tong H."/>
            <person name="Jin Y."/>
            <person name="Liu W."/>
            <person name="Li F."/>
            <person name="Fang J."/>
            <person name="Yin Y."/>
            <person name="Qian Q."/>
            <person name="Zhu L."/>
            <person name="Chu C."/>
        </authorList>
    </citation>
    <scope>FUNCTION</scope>
</reference>
<reference key="8">
    <citation type="journal article" date="2012" name="Plant Cell">
        <title>DWARF AND LOW-TILLERING acts as a direct downstream target of a GSK3/SHAGGY-like kinase to mediate brassinosteroid responses in rice.</title>
        <authorList>
            <person name="Tong H."/>
            <person name="Liu L."/>
            <person name="Jin Y."/>
            <person name="Du L."/>
            <person name="Yin Y."/>
            <person name="Qian Q."/>
            <person name="Zhu L."/>
            <person name="Chu C."/>
        </authorList>
    </citation>
    <scope>PHOSPHORYLATION</scope>
</reference>
<reference key="9">
    <citation type="journal article" date="2012" name="PLoS Genet.">
        <title>Dynamics of brassinosteroid response modulated by negative regulator LIC in rice.</title>
        <authorList>
            <person name="Zhang C."/>
            <person name="Xu Y."/>
            <person name="Guo S."/>
            <person name="Zhu J."/>
            <person name="Huan Q."/>
            <person name="Liu H."/>
            <person name="Wang L."/>
            <person name="Luo G."/>
            <person name="Wang X."/>
            <person name="Chong K."/>
        </authorList>
    </citation>
    <scope>FUNCTION</scope>
    <scope>INDUCTION</scope>
</reference>
<reference key="10">
    <citation type="journal article" date="2017" name="Plant Cell">
        <title>The RLA1/SMOS1 transcription factor functions with OsBZR1 to regulate brassinosteroid signaling and rice architecture.</title>
        <authorList>
            <person name="Qiao S."/>
            <person name="Sun S."/>
            <person name="Wang L."/>
            <person name="Wu Z."/>
            <person name="Li C."/>
            <person name="Li X."/>
            <person name="Wang T."/>
            <person name="Leng L."/>
            <person name="Tian W."/>
            <person name="Lu T."/>
            <person name="Wang X."/>
        </authorList>
    </citation>
    <scope>INTERACTION WITH SMOS1</scope>
</reference>
<reference key="11">
    <citation type="journal article" date="2019" name="Plant J.">
        <title>OsBZR1 turnover mediated by OsSK22-regulated U-box E3 ligase OsPUB24 in rice BR response.</title>
        <authorList>
            <person name="Min H.J."/>
            <person name="Cui L.H."/>
            <person name="Oh T.R."/>
            <person name="Kim J.H."/>
            <person name="Kim T.W."/>
            <person name="Kim W.T."/>
        </authorList>
    </citation>
    <scope>INTERACTION WITH PUB24</scope>
    <scope>SUBCELLULAR LOCATION</scope>
    <scope>UBIQUITINATION</scope>
</reference>
<protein>
    <recommendedName>
        <fullName evidence="10">Protein BZR1 homolog 1</fullName>
        <shortName evidence="9">OsBZR1</shortName>
    </recommendedName>
    <alternativeName>
        <fullName evidence="10">Protein BRASSINAZOLE-RESISTANT 1 homolog 1</fullName>
    </alternativeName>
</protein>
<dbReference type="EMBL" id="AP004276">
    <property type="protein sequence ID" value="BAC79822.1"/>
    <property type="molecule type" value="Genomic_DNA"/>
</dbReference>
<dbReference type="EMBL" id="AP008213">
    <property type="protein sequence ID" value="BAF22014.2"/>
    <property type="status" value="ALT_INIT"/>
    <property type="molecule type" value="Genomic_DNA"/>
</dbReference>
<dbReference type="EMBL" id="AP014963">
    <property type="protein sequence ID" value="BAT02328.1"/>
    <property type="molecule type" value="Genomic_DNA"/>
</dbReference>
<dbReference type="EMBL" id="CM000144">
    <property type="protein sequence ID" value="EAZ40428.1"/>
    <property type="molecule type" value="Genomic_DNA"/>
</dbReference>
<dbReference type="EMBL" id="AK106748">
    <property type="protein sequence ID" value="BAG97818.1"/>
    <property type="molecule type" value="mRNA"/>
</dbReference>
<dbReference type="RefSeq" id="XP_015645123.1">
    <property type="nucleotide sequence ID" value="XM_015789637.1"/>
</dbReference>
<dbReference type="SMR" id="Q7XI96"/>
<dbReference type="DIP" id="DIP-46484N"/>
<dbReference type="FunCoup" id="Q7XI96">
    <property type="interactions" value="2586"/>
</dbReference>
<dbReference type="IntAct" id="Q7XI96">
    <property type="interactions" value="8"/>
</dbReference>
<dbReference type="STRING" id="39947.Q7XI96"/>
<dbReference type="iPTMnet" id="Q7XI96"/>
<dbReference type="PaxDb" id="39947-Q7XI96"/>
<dbReference type="EnsemblPlants" id="Os07t0580500-01">
    <property type="protein sequence ID" value="Os07t0580500-01"/>
    <property type="gene ID" value="Os07g0580500"/>
</dbReference>
<dbReference type="Gramene" id="Os07t0580500-01">
    <property type="protein sequence ID" value="Os07t0580500-01"/>
    <property type="gene ID" value="Os07g0580500"/>
</dbReference>
<dbReference type="KEGG" id="dosa:Os07g0580500"/>
<dbReference type="eggNOG" id="ENOG502QS1Z">
    <property type="taxonomic scope" value="Eukaryota"/>
</dbReference>
<dbReference type="HOGENOM" id="CLU_036256_0_0_1"/>
<dbReference type="InParanoid" id="Q7XI96"/>
<dbReference type="OMA" id="CKVKAWE"/>
<dbReference type="OrthoDB" id="775852at2759"/>
<dbReference type="PlantReactome" id="R-OSA-5632095">
    <property type="pathway name" value="Brassinosteroid signaling"/>
</dbReference>
<dbReference type="PlantReactome" id="R-OSA-5679411">
    <property type="pathway name" value="Gibberellin signaling"/>
</dbReference>
<dbReference type="Proteomes" id="UP000000763">
    <property type="component" value="Chromosome 7"/>
</dbReference>
<dbReference type="Proteomes" id="UP000007752">
    <property type="component" value="Chromosome 7"/>
</dbReference>
<dbReference type="Proteomes" id="UP000059680">
    <property type="component" value="Chromosome 7"/>
</dbReference>
<dbReference type="GO" id="GO:0005737">
    <property type="term" value="C:cytoplasm"/>
    <property type="evidence" value="ECO:0000314"/>
    <property type="project" value="UniProtKB"/>
</dbReference>
<dbReference type="GO" id="GO:0005634">
    <property type="term" value="C:nucleus"/>
    <property type="evidence" value="ECO:0000314"/>
    <property type="project" value="UniProtKB"/>
</dbReference>
<dbReference type="GO" id="GO:0003677">
    <property type="term" value="F:DNA binding"/>
    <property type="evidence" value="ECO:0007669"/>
    <property type="project" value="UniProtKB-KW"/>
</dbReference>
<dbReference type="GO" id="GO:0003700">
    <property type="term" value="F:DNA-binding transcription factor activity"/>
    <property type="evidence" value="ECO:0000314"/>
    <property type="project" value="UniProtKB"/>
</dbReference>
<dbReference type="GO" id="GO:0009742">
    <property type="term" value="P:brassinosteroid mediated signaling pathway"/>
    <property type="evidence" value="ECO:0007669"/>
    <property type="project" value="UniProtKB-KW"/>
</dbReference>
<dbReference type="GO" id="GO:0006351">
    <property type="term" value="P:DNA-templated transcription"/>
    <property type="evidence" value="ECO:0007669"/>
    <property type="project" value="InterPro"/>
</dbReference>
<dbReference type="GO" id="GO:0009741">
    <property type="term" value="P:response to brassinosteroid"/>
    <property type="evidence" value="ECO:0000315"/>
    <property type="project" value="UniProtKB"/>
</dbReference>
<dbReference type="InterPro" id="IPR008540">
    <property type="entry name" value="BES1_N"/>
</dbReference>
<dbReference type="InterPro" id="IPR033264">
    <property type="entry name" value="BZR"/>
</dbReference>
<dbReference type="PANTHER" id="PTHR31506">
    <property type="entry name" value="BES1/BZR1 HOMOLOG PROTEIN 3-RELATED"/>
    <property type="match status" value="1"/>
</dbReference>
<dbReference type="PANTHER" id="PTHR31506:SF15">
    <property type="entry name" value="BES1_BZR1 HOMOLOG PROTEIN 2"/>
    <property type="match status" value="1"/>
</dbReference>
<dbReference type="Pfam" id="PF05687">
    <property type="entry name" value="BES1_N"/>
    <property type="match status" value="1"/>
</dbReference>